<organism>
    <name type="scientific">Shigella flexneri</name>
    <dbReference type="NCBI Taxonomy" id="623"/>
    <lineage>
        <taxon>Bacteria</taxon>
        <taxon>Pseudomonadati</taxon>
        <taxon>Pseudomonadota</taxon>
        <taxon>Gammaproteobacteria</taxon>
        <taxon>Enterobacterales</taxon>
        <taxon>Enterobacteriaceae</taxon>
        <taxon>Shigella</taxon>
    </lineage>
</organism>
<feature type="chain" id="PRO_0000366269" description="Ribosomal RNA large subunit methyltransferase I">
    <location>
        <begin position="1"/>
        <end position="396"/>
    </location>
</feature>
<feature type="domain" description="PUA" evidence="1">
    <location>
        <begin position="2"/>
        <end position="81"/>
    </location>
</feature>
<feature type="sequence conflict" description="In Ref. 2; AAP16483." evidence="2" ref="2">
    <original>T</original>
    <variation>S</variation>
    <location>
        <position position="142"/>
    </location>
</feature>
<feature type="sequence conflict" description="In Ref. 2; AAP16483." evidence="2" ref="2">
    <original>H</original>
    <variation>Q</variation>
    <location>
        <position position="171"/>
    </location>
</feature>
<feature type="sequence conflict" description="In Ref. 2; AAP16483." evidence="2" ref="2">
    <original>L</original>
    <variation>V</variation>
    <location>
        <position position="174"/>
    </location>
</feature>
<feature type="sequence conflict" description="In Ref. 2; AAP16483." evidence="2" ref="2">
    <original>N</original>
    <variation>K</variation>
    <location>
        <position position="191"/>
    </location>
</feature>
<feature type="sequence conflict" description="In Ref. 2; AAP16483." evidence="2" ref="2">
    <original>H</original>
    <variation>Q</variation>
    <location>
        <position position="197"/>
    </location>
</feature>
<feature type="sequence conflict" description="In Ref. 2; AAP16483." evidence="2" ref="2">
    <original>A</original>
    <variation>G</variation>
    <location>
        <position position="203"/>
    </location>
</feature>
<reference key="1">
    <citation type="journal article" date="2002" name="Nucleic Acids Res.">
        <title>Genome sequence of Shigella flexneri 2a: insights into pathogenicity through comparison with genomes of Escherichia coli K12 and O157.</title>
        <authorList>
            <person name="Jin Q."/>
            <person name="Yuan Z."/>
            <person name="Xu J."/>
            <person name="Wang Y."/>
            <person name="Shen Y."/>
            <person name="Lu W."/>
            <person name="Wang J."/>
            <person name="Liu H."/>
            <person name="Yang J."/>
            <person name="Yang F."/>
            <person name="Zhang X."/>
            <person name="Zhang J."/>
            <person name="Yang G."/>
            <person name="Wu H."/>
            <person name="Qu D."/>
            <person name="Dong J."/>
            <person name="Sun L."/>
            <person name="Xue Y."/>
            <person name="Zhao A."/>
            <person name="Gao Y."/>
            <person name="Zhu J."/>
            <person name="Kan B."/>
            <person name="Ding K."/>
            <person name="Chen S."/>
            <person name="Cheng H."/>
            <person name="Yao Z."/>
            <person name="He B."/>
            <person name="Chen R."/>
            <person name="Ma D."/>
            <person name="Qiang B."/>
            <person name="Wen Y."/>
            <person name="Hou Y."/>
            <person name="Yu J."/>
        </authorList>
    </citation>
    <scope>NUCLEOTIDE SEQUENCE [LARGE SCALE GENOMIC DNA]</scope>
    <source>
        <strain>301 / Serotype 2a</strain>
    </source>
</reference>
<reference key="2">
    <citation type="journal article" date="2003" name="Infect. Immun.">
        <title>Complete genome sequence and comparative genomics of Shigella flexneri serotype 2a strain 2457T.</title>
        <authorList>
            <person name="Wei J."/>
            <person name="Goldberg M.B."/>
            <person name="Burland V."/>
            <person name="Venkatesan M.M."/>
            <person name="Deng W."/>
            <person name="Fournier G."/>
            <person name="Mayhew G.F."/>
            <person name="Plunkett G. III"/>
            <person name="Rose D.J."/>
            <person name="Darling A."/>
            <person name="Mau B."/>
            <person name="Perna N.T."/>
            <person name="Payne S.M."/>
            <person name="Runyen-Janecky L.J."/>
            <person name="Zhou S."/>
            <person name="Schwartz D.C."/>
            <person name="Blattner F.R."/>
        </authorList>
    </citation>
    <scope>NUCLEOTIDE SEQUENCE [LARGE SCALE GENOMIC DNA]</scope>
    <source>
        <strain>ATCC 700930 / 2457T / Serotype 2a</strain>
    </source>
</reference>
<dbReference type="EC" id="2.1.1.191" evidence="1"/>
<dbReference type="EMBL" id="AE005674">
    <property type="protein sequence ID" value="AAN42597.1"/>
    <property type="molecule type" value="Genomic_DNA"/>
</dbReference>
<dbReference type="EMBL" id="AE014073">
    <property type="protein sequence ID" value="AAP16483.1"/>
    <property type="status" value="ALT_INIT"/>
    <property type="molecule type" value="Genomic_DNA"/>
</dbReference>
<dbReference type="RefSeq" id="NP_706890.1">
    <property type="nucleotide sequence ID" value="NC_004337.2"/>
</dbReference>
<dbReference type="RefSeq" id="WP_000116299.1">
    <property type="nucleotide sequence ID" value="NZ_CP123365.1"/>
</dbReference>
<dbReference type="SMR" id="Q83LM0"/>
<dbReference type="STRING" id="198214.SF0970"/>
<dbReference type="PaxDb" id="198214-SF0970"/>
<dbReference type="GeneID" id="1023901"/>
<dbReference type="KEGG" id="sfl:SF0970"/>
<dbReference type="KEGG" id="sfx:S1035"/>
<dbReference type="PATRIC" id="fig|198214.7.peg.1128"/>
<dbReference type="HOGENOM" id="CLU_014042_0_0_6"/>
<dbReference type="Proteomes" id="UP000001006">
    <property type="component" value="Chromosome"/>
</dbReference>
<dbReference type="Proteomes" id="UP000002673">
    <property type="component" value="Chromosome"/>
</dbReference>
<dbReference type="GO" id="GO:0005737">
    <property type="term" value="C:cytoplasm"/>
    <property type="evidence" value="ECO:0007669"/>
    <property type="project" value="UniProtKB-SubCell"/>
</dbReference>
<dbReference type="GO" id="GO:0003723">
    <property type="term" value="F:RNA binding"/>
    <property type="evidence" value="ECO:0007669"/>
    <property type="project" value="UniProtKB-KW"/>
</dbReference>
<dbReference type="GO" id="GO:0016434">
    <property type="term" value="F:rRNA (cytosine) methyltransferase activity"/>
    <property type="evidence" value="ECO:0007669"/>
    <property type="project" value="UniProtKB-UniRule"/>
</dbReference>
<dbReference type="CDD" id="cd02440">
    <property type="entry name" value="AdoMet_MTases"/>
    <property type="match status" value="1"/>
</dbReference>
<dbReference type="CDD" id="cd21153">
    <property type="entry name" value="PUA_RlmI"/>
    <property type="match status" value="1"/>
</dbReference>
<dbReference type="CDD" id="cd11572">
    <property type="entry name" value="RlmI_M_like"/>
    <property type="match status" value="1"/>
</dbReference>
<dbReference type="FunFam" id="2.30.130.10:FF:000005">
    <property type="entry name" value="Ribosomal RNA large subunit methyltransferase I"/>
    <property type="match status" value="1"/>
</dbReference>
<dbReference type="FunFam" id="3.30.750.80:FF:000002">
    <property type="entry name" value="Ribosomal RNA large subunit methyltransferase I"/>
    <property type="match status" value="1"/>
</dbReference>
<dbReference type="FunFam" id="3.40.50.150:FF:000044">
    <property type="entry name" value="Ribosomal RNA large subunit methyltransferase I"/>
    <property type="match status" value="1"/>
</dbReference>
<dbReference type="Gene3D" id="2.30.130.10">
    <property type="entry name" value="PUA domain"/>
    <property type="match status" value="1"/>
</dbReference>
<dbReference type="Gene3D" id="3.30.750.80">
    <property type="entry name" value="RNA methyltransferase domain (HRMD) like"/>
    <property type="match status" value="1"/>
</dbReference>
<dbReference type="Gene3D" id="3.40.50.150">
    <property type="entry name" value="Vaccinia Virus protein VP39"/>
    <property type="match status" value="1"/>
</dbReference>
<dbReference type="HAMAP" id="MF_01857">
    <property type="entry name" value="23SrRNA_methyltr_I"/>
    <property type="match status" value="1"/>
</dbReference>
<dbReference type="InterPro" id="IPR002478">
    <property type="entry name" value="PUA"/>
</dbReference>
<dbReference type="InterPro" id="IPR015947">
    <property type="entry name" value="PUA-like_sf"/>
</dbReference>
<dbReference type="InterPro" id="IPR036974">
    <property type="entry name" value="PUA_sf"/>
</dbReference>
<dbReference type="InterPro" id="IPR023542">
    <property type="entry name" value="RLMI"/>
</dbReference>
<dbReference type="InterPro" id="IPR041532">
    <property type="entry name" value="RlmI-like_PUA"/>
</dbReference>
<dbReference type="InterPro" id="IPR019614">
    <property type="entry name" value="SAM-dep_methyl-trfase"/>
</dbReference>
<dbReference type="InterPro" id="IPR029063">
    <property type="entry name" value="SAM-dependent_MTases_sf"/>
</dbReference>
<dbReference type="NCBIfam" id="NF011707">
    <property type="entry name" value="PRK15128.1"/>
    <property type="match status" value="1"/>
</dbReference>
<dbReference type="PANTHER" id="PTHR42873">
    <property type="entry name" value="RIBOSOMAL RNA LARGE SUBUNIT METHYLTRANSFERASE"/>
    <property type="match status" value="1"/>
</dbReference>
<dbReference type="PANTHER" id="PTHR42873:SF1">
    <property type="entry name" value="S-ADENOSYLMETHIONINE-DEPENDENT METHYLTRANSFERASE DOMAIN-CONTAINING PROTEIN"/>
    <property type="match status" value="1"/>
</dbReference>
<dbReference type="Pfam" id="PF10672">
    <property type="entry name" value="Methyltrans_SAM"/>
    <property type="match status" value="1"/>
</dbReference>
<dbReference type="Pfam" id="PF17785">
    <property type="entry name" value="PUA_3"/>
    <property type="match status" value="1"/>
</dbReference>
<dbReference type="SMART" id="SM00359">
    <property type="entry name" value="PUA"/>
    <property type="match status" value="1"/>
</dbReference>
<dbReference type="SUPFAM" id="SSF88697">
    <property type="entry name" value="PUA domain-like"/>
    <property type="match status" value="1"/>
</dbReference>
<dbReference type="SUPFAM" id="SSF53335">
    <property type="entry name" value="S-adenosyl-L-methionine-dependent methyltransferases"/>
    <property type="match status" value="1"/>
</dbReference>
<dbReference type="PROSITE" id="PS50890">
    <property type="entry name" value="PUA"/>
    <property type="match status" value="1"/>
</dbReference>
<name>RLMI_SHIFL</name>
<keyword id="KW-0963">Cytoplasm</keyword>
<keyword id="KW-0489">Methyltransferase</keyword>
<keyword id="KW-1185">Reference proteome</keyword>
<keyword id="KW-0694">RNA-binding</keyword>
<keyword id="KW-0698">rRNA processing</keyword>
<keyword id="KW-0949">S-adenosyl-L-methionine</keyword>
<keyword id="KW-0808">Transferase</keyword>
<proteinExistence type="inferred from homology"/>
<gene>
    <name evidence="1" type="primary">rlmI</name>
    <name type="ordered locus">SF0970</name>
    <name type="ordered locus">S1035</name>
</gene>
<sequence length="396" mass="44403">MSVRLVLAKGREKSLLRRHPWVFSGAVARMEGKASLGETIDIVDHQGKWLARGAYSPASQIRARVWTFDPSESIDIAFFSRRLQQAQKWRDWLAQKDGLDSYRLIAGESDGLPGITIDRFGNFLVLQLLSAGAEYQRAALITALQTLYPECAIYDRSDVAVRKKEGMELTHGLLTGELPPALLPIEEHGMNLLVDIHHGHKTAYYLDQRDSRLATRRYVENKRVLNCFSYTGGFAVSALMGGCSQVVSVDTSQEALDIARQNVELNKLDLSKAEFVRDDVFKLLRTYRDRGEKFDVIVMDPPKFVENKSQLMGACRGYKDINMLAIQLLNEGGILLTFSCSGLMTSDLFQKIIADAAIDAGRDVQFIEQFRQAADHPVIATYPEGLYLKGFACRVM</sequence>
<accession>Q83LM0</accession>
<accession>Q7UD12</accession>
<comment type="function">
    <text evidence="1">Specifically methylates the cytosine at position 1962 (m5C1962) of 23S rRNA.</text>
</comment>
<comment type="catalytic activity">
    <reaction evidence="1">
        <text>cytidine(1962) in 23S rRNA + S-adenosyl-L-methionine = 5-methylcytidine(1962) in 23S rRNA + S-adenosyl-L-homocysteine + H(+)</text>
        <dbReference type="Rhea" id="RHEA:42912"/>
        <dbReference type="Rhea" id="RHEA-COMP:10382"/>
        <dbReference type="Rhea" id="RHEA-COMP:10386"/>
        <dbReference type="ChEBI" id="CHEBI:15378"/>
        <dbReference type="ChEBI" id="CHEBI:57856"/>
        <dbReference type="ChEBI" id="CHEBI:59789"/>
        <dbReference type="ChEBI" id="CHEBI:74483"/>
        <dbReference type="ChEBI" id="CHEBI:82748"/>
        <dbReference type="EC" id="2.1.1.191"/>
    </reaction>
</comment>
<comment type="subcellular location">
    <subcellularLocation>
        <location evidence="1">Cytoplasm</location>
    </subcellularLocation>
</comment>
<comment type="similarity">
    <text evidence="1">Belongs to the methyltransferase superfamily. RlmI family.</text>
</comment>
<comment type="sequence caution" evidence="2">
    <conflict type="erroneous initiation">
        <sequence resource="EMBL-CDS" id="AAP16483"/>
    </conflict>
</comment>
<protein>
    <recommendedName>
        <fullName evidence="1">Ribosomal RNA large subunit methyltransferase I</fullName>
        <ecNumber evidence="1">2.1.1.191</ecNumber>
    </recommendedName>
    <alternativeName>
        <fullName evidence="1">23S rRNA m5C1962 methyltransferase</fullName>
    </alternativeName>
    <alternativeName>
        <fullName evidence="1">rRNA (cytosine-C(5)-)-methyltransferase RlmI</fullName>
    </alternativeName>
</protein>
<evidence type="ECO:0000255" key="1">
    <source>
        <dbReference type="HAMAP-Rule" id="MF_01857"/>
    </source>
</evidence>
<evidence type="ECO:0000305" key="2"/>